<sequence>MGSCVSSPLKGSPFGKRPVRRRHSSNSRTSSVPRFDSSTNLSRRLIFQPPSRVLPEPIGDGIHLKYDLGKELGRGEFGVTHECIEISTRERFACKRISKEKLRTEIDVEDVRREVEIMRCLPKHPNIVSFKEAFEDKDAVYLVMEICEGGELFDRIVSRGHYTERAAASVAKTILEVVKVCHEHGVIHRDLKPENFLFSNGTETAQLKAIDFGLSIFFKPAQRFNEIVGSPYYMAPEVLRRNYGPEIDVWSAGVILYILLCGVPPFWAETEEGIAHAIVRGNIDFERDPWPKVSHEAKELVKNMLDANPYSRLTVQEVLEHPWIRNAERAPNVNLGDNVRTKIQQFLLMNRFKKKVLRIVADNLPNEEIAAIVQMFQTMDTDKNGHLTFEELRDGLKKIGQVVPDGDVKMLMDAADTDGNGMLSCDEFVTLSIHLKRMGCDEHLQEAFKYFDKNGNGFIELDELKVALCDDKLGHANGNDQWIKDIFFDVDLNKDGRISFDEFKAMMKSGTDWKMASRQYSRALLNALSIKMFKEDFGDNGPKSHSMEFPIARKRAKLLDAPKNKSMELQISKTYKPSGLRN</sequence>
<evidence type="ECO:0000250" key="1"/>
<evidence type="ECO:0000250" key="2">
    <source>
        <dbReference type="UniProtKB" id="Q9FKW4"/>
    </source>
</evidence>
<evidence type="ECO:0000255" key="3"/>
<evidence type="ECO:0000255" key="4">
    <source>
        <dbReference type="PROSITE-ProRule" id="PRU00159"/>
    </source>
</evidence>
<evidence type="ECO:0000255" key="5">
    <source>
        <dbReference type="PROSITE-ProRule" id="PRU00448"/>
    </source>
</evidence>
<evidence type="ECO:0000255" key="6">
    <source>
        <dbReference type="PROSITE-ProRule" id="PRU10027"/>
    </source>
</evidence>
<evidence type="ECO:0000256" key="7">
    <source>
        <dbReference type="SAM" id="MobiDB-lite"/>
    </source>
</evidence>
<evidence type="ECO:0000305" key="8"/>
<keyword id="KW-0067">ATP-binding</keyword>
<keyword id="KW-0106">Calcium</keyword>
<keyword id="KW-0418">Kinase</keyword>
<keyword id="KW-0449">Lipoprotein</keyword>
<keyword id="KW-0472">Membrane</keyword>
<keyword id="KW-0479">Metal-binding</keyword>
<keyword id="KW-0519">Myristate</keyword>
<keyword id="KW-0547">Nucleotide-binding</keyword>
<keyword id="KW-0597">Phosphoprotein</keyword>
<keyword id="KW-1185">Reference proteome</keyword>
<keyword id="KW-0677">Repeat</keyword>
<keyword id="KW-0723">Serine/threonine-protein kinase</keyword>
<keyword id="KW-0808">Transferase</keyword>
<reference key="1">
    <citation type="journal article" date="1999" name="Nature">
        <title>Sequence and analysis of chromosome 2 of the plant Arabidopsis thaliana.</title>
        <authorList>
            <person name="Lin X."/>
            <person name="Kaul S."/>
            <person name="Rounsley S.D."/>
            <person name="Shea T.P."/>
            <person name="Benito M.-I."/>
            <person name="Town C.D."/>
            <person name="Fujii C.Y."/>
            <person name="Mason T.M."/>
            <person name="Bowman C.L."/>
            <person name="Barnstead M.E."/>
            <person name="Feldblyum T.V."/>
            <person name="Buell C.R."/>
            <person name="Ketchum K.A."/>
            <person name="Lee J.J."/>
            <person name="Ronning C.M."/>
            <person name="Koo H.L."/>
            <person name="Moffat K.S."/>
            <person name="Cronin L.A."/>
            <person name="Shen M."/>
            <person name="Pai G."/>
            <person name="Van Aken S."/>
            <person name="Umayam L."/>
            <person name="Tallon L.J."/>
            <person name="Gill J.E."/>
            <person name="Adams M.D."/>
            <person name="Carrera A.J."/>
            <person name="Creasy T.H."/>
            <person name="Goodman H.M."/>
            <person name="Somerville C.R."/>
            <person name="Copenhaver G.P."/>
            <person name="Preuss D."/>
            <person name="Nierman W.C."/>
            <person name="White O."/>
            <person name="Eisen J.A."/>
            <person name="Salzberg S.L."/>
            <person name="Fraser C.M."/>
            <person name="Venter J.C."/>
        </authorList>
    </citation>
    <scope>NUCLEOTIDE SEQUENCE [LARGE SCALE GENOMIC DNA]</scope>
    <source>
        <strain>cv. Columbia</strain>
    </source>
</reference>
<reference key="2">
    <citation type="journal article" date="2017" name="Plant J.">
        <title>Araport11: a complete reannotation of the Arabidopsis thaliana reference genome.</title>
        <authorList>
            <person name="Cheng C.Y."/>
            <person name="Krishnakumar V."/>
            <person name="Chan A.P."/>
            <person name="Thibaud-Nissen F."/>
            <person name="Schobel S."/>
            <person name="Town C.D."/>
        </authorList>
    </citation>
    <scope>GENOME REANNOTATION</scope>
    <source>
        <strain>cv. Columbia</strain>
    </source>
</reference>
<reference key="3">
    <citation type="journal article" date="2002" name="Science">
        <title>Functional annotation of a full-length Arabidopsis cDNA collection.</title>
        <authorList>
            <person name="Seki M."/>
            <person name="Narusaka M."/>
            <person name="Kamiya A."/>
            <person name="Ishida J."/>
            <person name="Satou M."/>
            <person name="Sakurai T."/>
            <person name="Nakajima M."/>
            <person name="Enju A."/>
            <person name="Akiyama K."/>
            <person name="Oono Y."/>
            <person name="Muramatsu M."/>
            <person name="Hayashizaki Y."/>
            <person name="Kawai J."/>
            <person name="Carninci P."/>
            <person name="Itoh M."/>
            <person name="Ishii Y."/>
            <person name="Arakawa T."/>
            <person name="Shibata K."/>
            <person name="Shinagawa A."/>
            <person name="Shinozaki K."/>
        </authorList>
    </citation>
    <scope>NUCLEOTIDE SEQUENCE [LARGE SCALE MRNA]</scope>
    <source>
        <strain>cv. Columbia</strain>
    </source>
</reference>
<reference key="4">
    <citation type="journal article" date="2006" name="Plant Biotechnol. J.">
        <title>Simultaneous high-throughput recombinational cloning of open reading frames in closed and open configurations.</title>
        <authorList>
            <person name="Underwood B.A."/>
            <person name="Vanderhaeghen R."/>
            <person name="Whitford R."/>
            <person name="Town C.D."/>
            <person name="Hilson P."/>
        </authorList>
    </citation>
    <scope>NUCLEOTIDE SEQUENCE [LARGE SCALE MRNA]</scope>
    <source>
        <strain>cv. Columbia</strain>
    </source>
</reference>
<reference key="5">
    <citation type="journal article" date="2001" name="New Phytol.">
        <title>The CDPK superfamily of protein kinases.</title>
        <authorList>
            <person name="Harmon A.C."/>
            <person name="Gribskov M."/>
            <person name="Gubrium E."/>
            <person name="Harper J.F."/>
        </authorList>
    </citation>
    <scope>GENE FAMILY</scope>
    <scope>NOMENCLATURE</scope>
</reference>
<reference key="6">
    <citation type="journal article" date="2002" name="Plant Physiol.">
        <title>Calcium signaling through protein kinases. The Arabidopsis calcium-dependent protein kinase gene family.</title>
        <authorList>
            <person name="Cheng S.-H."/>
            <person name="Willmann M.R."/>
            <person name="Chen H.-C."/>
            <person name="Sheen J."/>
        </authorList>
    </citation>
    <scope>GENE FAMILY</scope>
    <scope>NOMENCLATURE</scope>
</reference>
<reference key="7">
    <citation type="journal article" date="2003" name="Plant Physiol.">
        <title>The Arabidopsis CDPK-SnRK superfamily of protein kinases.</title>
        <authorList>
            <person name="Hrabak E.M."/>
            <person name="Chan C.W.M."/>
            <person name="Gribskov M."/>
            <person name="Harper J.F."/>
            <person name="Choi J.H."/>
            <person name="Halford N."/>
            <person name="Kudla J."/>
            <person name="Luan S."/>
            <person name="Nimmo H.G."/>
            <person name="Sussman M.R."/>
            <person name="Thomas M."/>
            <person name="Walker-Simmons K."/>
            <person name="Zhu J.-K."/>
            <person name="Harmon A.C."/>
        </authorList>
    </citation>
    <scope>GENE FAMILY</scope>
    <scope>NOMENCLATURE</scope>
</reference>
<feature type="initiator methionine" description="Removed" evidence="3">
    <location>
        <position position="1"/>
    </location>
</feature>
<feature type="chain" id="PRO_0000363346" description="Calcium-dependent protein kinase 24">
    <location>
        <begin position="2"/>
        <end position="582"/>
    </location>
</feature>
<feature type="domain" description="Protein kinase" evidence="4">
    <location>
        <begin position="66"/>
        <end position="324"/>
    </location>
</feature>
<feature type="domain" description="EF-hand 1" evidence="5">
    <location>
        <begin position="367"/>
        <end position="402"/>
    </location>
</feature>
<feature type="domain" description="EF-hand 2" evidence="5">
    <location>
        <begin position="403"/>
        <end position="438"/>
    </location>
</feature>
<feature type="domain" description="EF-hand 3" evidence="5">
    <location>
        <begin position="439"/>
        <end position="474"/>
    </location>
</feature>
<feature type="domain" description="EF-hand 4" evidence="5">
    <location>
        <begin position="478"/>
        <end position="513"/>
    </location>
</feature>
<feature type="region of interest" description="Disordered" evidence="7">
    <location>
        <begin position="1"/>
        <end position="36"/>
    </location>
</feature>
<feature type="region of interest" description="Autoinhibitory domain" evidence="1">
    <location>
        <begin position="330"/>
        <end position="360"/>
    </location>
</feature>
<feature type="active site" description="Proton acceptor" evidence="4 6">
    <location>
        <position position="190"/>
    </location>
</feature>
<feature type="binding site" evidence="4">
    <location>
        <begin position="72"/>
        <end position="80"/>
    </location>
    <ligand>
        <name>ATP</name>
        <dbReference type="ChEBI" id="CHEBI:30616"/>
    </ligand>
</feature>
<feature type="binding site" evidence="4">
    <location>
        <position position="95"/>
    </location>
    <ligand>
        <name>ATP</name>
        <dbReference type="ChEBI" id="CHEBI:30616"/>
    </ligand>
</feature>
<feature type="binding site" evidence="5">
    <location>
        <position position="380"/>
    </location>
    <ligand>
        <name>Ca(2+)</name>
        <dbReference type="ChEBI" id="CHEBI:29108"/>
        <label>1</label>
    </ligand>
</feature>
<feature type="binding site" evidence="5">
    <location>
        <position position="382"/>
    </location>
    <ligand>
        <name>Ca(2+)</name>
        <dbReference type="ChEBI" id="CHEBI:29108"/>
        <label>1</label>
    </ligand>
</feature>
<feature type="binding site" evidence="5">
    <location>
        <position position="384"/>
    </location>
    <ligand>
        <name>Ca(2+)</name>
        <dbReference type="ChEBI" id="CHEBI:29108"/>
        <label>1</label>
    </ligand>
</feature>
<feature type="binding site" evidence="5">
    <location>
        <position position="386"/>
    </location>
    <ligand>
        <name>Ca(2+)</name>
        <dbReference type="ChEBI" id="CHEBI:29108"/>
        <label>1</label>
    </ligand>
</feature>
<feature type="binding site" evidence="5">
    <location>
        <position position="391"/>
    </location>
    <ligand>
        <name>Ca(2+)</name>
        <dbReference type="ChEBI" id="CHEBI:29108"/>
        <label>1</label>
    </ligand>
</feature>
<feature type="binding site" evidence="5">
    <location>
        <position position="416"/>
    </location>
    <ligand>
        <name>Ca(2+)</name>
        <dbReference type="ChEBI" id="CHEBI:29108"/>
        <label>2</label>
    </ligand>
</feature>
<feature type="binding site" evidence="5">
    <location>
        <position position="418"/>
    </location>
    <ligand>
        <name>Ca(2+)</name>
        <dbReference type="ChEBI" id="CHEBI:29108"/>
        <label>2</label>
    </ligand>
</feature>
<feature type="binding site" evidence="5">
    <location>
        <position position="420"/>
    </location>
    <ligand>
        <name>Ca(2+)</name>
        <dbReference type="ChEBI" id="CHEBI:29108"/>
        <label>2</label>
    </ligand>
</feature>
<feature type="binding site" evidence="5">
    <location>
        <position position="422"/>
    </location>
    <ligand>
        <name>Ca(2+)</name>
        <dbReference type="ChEBI" id="CHEBI:29108"/>
        <label>2</label>
    </ligand>
</feature>
<feature type="binding site" evidence="5">
    <location>
        <position position="427"/>
    </location>
    <ligand>
        <name>Ca(2+)</name>
        <dbReference type="ChEBI" id="CHEBI:29108"/>
        <label>2</label>
    </ligand>
</feature>
<feature type="binding site" evidence="5">
    <location>
        <position position="452"/>
    </location>
    <ligand>
        <name>Ca(2+)</name>
        <dbReference type="ChEBI" id="CHEBI:29108"/>
        <label>3</label>
    </ligand>
</feature>
<feature type="binding site" evidence="5">
    <location>
        <position position="454"/>
    </location>
    <ligand>
        <name>Ca(2+)</name>
        <dbReference type="ChEBI" id="CHEBI:29108"/>
        <label>3</label>
    </ligand>
</feature>
<feature type="binding site" evidence="5">
    <location>
        <position position="456"/>
    </location>
    <ligand>
        <name>Ca(2+)</name>
        <dbReference type="ChEBI" id="CHEBI:29108"/>
        <label>3</label>
    </ligand>
</feature>
<feature type="binding site" evidence="5">
    <location>
        <position position="463"/>
    </location>
    <ligand>
        <name>Ca(2+)</name>
        <dbReference type="ChEBI" id="CHEBI:29108"/>
        <label>3</label>
    </ligand>
</feature>
<feature type="binding site" evidence="5">
    <location>
        <position position="491"/>
    </location>
    <ligand>
        <name>Ca(2+)</name>
        <dbReference type="ChEBI" id="CHEBI:29108"/>
        <label>4</label>
    </ligand>
</feature>
<feature type="binding site" evidence="5">
    <location>
        <position position="493"/>
    </location>
    <ligand>
        <name>Ca(2+)</name>
        <dbReference type="ChEBI" id="CHEBI:29108"/>
        <label>4</label>
    </ligand>
</feature>
<feature type="binding site" evidence="5">
    <location>
        <position position="495"/>
    </location>
    <ligand>
        <name>Ca(2+)</name>
        <dbReference type="ChEBI" id="CHEBI:29108"/>
        <label>4</label>
    </ligand>
</feature>
<feature type="binding site" evidence="5">
    <location>
        <position position="497"/>
    </location>
    <ligand>
        <name>Ca(2+)</name>
        <dbReference type="ChEBI" id="CHEBI:29108"/>
        <label>4</label>
    </ligand>
</feature>
<feature type="binding site" evidence="5">
    <location>
        <position position="502"/>
    </location>
    <ligand>
        <name>Ca(2+)</name>
        <dbReference type="ChEBI" id="CHEBI:29108"/>
        <label>4</label>
    </ligand>
</feature>
<feature type="modified residue" description="Phosphoserine" evidence="2">
    <location>
        <position position="230"/>
    </location>
</feature>
<feature type="modified residue" description="Phosphoserine" evidence="2">
    <location>
        <position position="499"/>
    </location>
</feature>
<feature type="lipid moiety-binding region" description="N-myristoyl glycine" evidence="3">
    <location>
        <position position="2"/>
    </location>
</feature>
<feature type="sequence conflict" description="In Ref. 3; BAC42531." evidence="8" ref="3">
    <original>T</original>
    <variation>A</variation>
    <location>
        <position position="381"/>
    </location>
</feature>
<accession>Q9SIQ7</accession>
<accession>A0MER1</accession>
<accession>Q8GY35</accession>
<organism>
    <name type="scientific">Arabidopsis thaliana</name>
    <name type="common">Mouse-ear cress</name>
    <dbReference type="NCBI Taxonomy" id="3702"/>
    <lineage>
        <taxon>Eukaryota</taxon>
        <taxon>Viridiplantae</taxon>
        <taxon>Streptophyta</taxon>
        <taxon>Embryophyta</taxon>
        <taxon>Tracheophyta</taxon>
        <taxon>Spermatophyta</taxon>
        <taxon>Magnoliopsida</taxon>
        <taxon>eudicotyledons</taxon>
        <taxon>Gunneridae</taxon>
        <taxon>Pentapetalae</taxon>
        <taxon>rosids</taxon>
        <taxon>malvids</taxon>
        <taxon>Brassicales</taxon>
        <taxon>Brassicaceae</taxon>
        <taxon>Camelineae</taxon>
        <taxon>Arabidopsis</taxon>
    </lineage>
</organism>
<dbReference type="EC" id="2.7.11.1"/>
<dbReference type="EMBL" id="AC007071">
    <property type="protein sequence ID" value="AAD24851.1"/>
    <property type="molecule type" value="Genomic_DNA"/>
</dbReference>
<dbReference type="EMBL" id="AC007169">
    <property type="protein sequence ID" value="AAM15433.1"/>
    <property type="molecule type" value="Genomic_DNA"/>
</dbReference>
<dbReference type="EMBL" id="CP002685">
    <property type="protein sequence ID" value="AEC08555.1"/>
    <property type="molecule type" value="Genomic_DNA"/>
</dbReference>
<dbReference type="EMBL" id="AK117892">
    <property type="protein sequence ID" value="BAC42531.1"/>
    <property type="molecule type" value="mRNA"/>
</dbReference>
<dbReference type="EMBL" id="DQ446585">
    <property type="protein sequence ID" value="ABE65877.1"/>
    <property type="molecule type" value="mRNA"/>
</dbReference>
<dbReference type="EMBL" id="DQ653033">
    <property type="protein sequence ID" value="ABK28519.1"/>
    <property type="status" value="ALT_SEQ"/>
    <property type="molecule type" value="mRNA"/>
</dbReference>
<dbReference type="PIR" id="E84721">
    <property type="entry name" value="E84721"/>
</dbReference>
<dbReference type="RefSeq" id="NP_180708.1">
    <property type="nucleotide sequence ID" value="NM_128707.3"/>
</dbReference>
<dbReference type="SMR" id="Q9SIQ7"/>
<dbReference type="BioGRID" id="3055">
    <property type="interactions" value="1"/>
</dbReference>
<dbReference type="FunCoup" id="Q9SIQ7">
    <property type="interactions" value="399"/>
</dbReference>
<dbReference type="STRING" id="3702.Q9SIQ7"/>
<dbReference type="PaxDb" id="3702-AT2G31500.1"/>
<dbReference type="ProteomicsDB" id="224479"/>
<dbReference type="EnsemblPlants" id="AT2G31500.1">
    <property type="protein sequence ID" value="AT2G31500.1"/>
    <property type="gene ID" value="AT2G31500"/>
</dbReference>
<dbReference type="GeneID" id="817708"/>
<dbReference type="Gramene" id="AT2G31500.1">
    <property type="protein sequence ID" value="AT2G31500.1"/>
    <property type="gene ID" value="AT2G31500"/>
</dbReference>
<dbReference type="KEGG" id="ath:AT2G31500"/>
<dbReference type="Araport" id="AT2G31500"/>
<dbReference type="TAIR" id="AT2G31500">
    <property type="gene designation" value="CPK24"/>
</dbReference>
<dbReference type="eggNOG" id="KOG0032">
    <property type="taxonomic scope" value="Eukaryota"/>
</dbReference>
<dbReference type="HOGENOM" id="CLU_000288_37_3_1"/>
<dbReference type="InParanoid" id="Q9SIQ7"/>
<dbReference type="OMA" id="IMRCLPK"/>
<dbReference type="PhylomeDB" id="Q9SIQ7"/>
<dbReference type="PRO" id="PR:Q9SIQ7"/>
<dbReference type="Proteomes" id="UP000006548">
    <property type="component" value="Chromosome 2"/>
</dbReference>
<dbReference type="ExpressionAtlas" id="Q9SIQ7">
    <property type="expression patterns" value="baseline and differential"/>
</dbReference>
<dbReference type="GO" id="GO:0005634">
    <property type="term" value="C:nucleus"/>
    <property type="evidence" value="ECO:0000314"/>
    <property type="project" value="TAIR"/>
</dbReference>
<dbReference type="GO" id="GO:0005886">
    <property type="term" value="C:plasma membrane"/>
    <property type="evidence" value="ECO:0000314"/>
    <property type="project" value="TAIR"/>
</dbReference>
<dbReference type="GO" id="GO:0005524">
    <property type="term" value="F:ATP binding"/>
    <property type="evidence" value="ECO:0007669"/>
    <property type="project" value="UniProtKB-KW"/>
</dbReference>
<dbReference type="GO" id="GO:0005509">
    <property type="term" value="F:calcium ion binding"/>
    <property type="evidence" value="ECO:0007669"/>
    <property type="project" value="InterPro"/>
</dbReference>
<dbReference type="GO" id="GO:0004672">
    <property type="term" value="F:protein kinase activity"/>
    <property type="evidence" value="ECO:0000314"/>
    <property type="project" value="TAIR"/>
</dbReference>
<dbReference type="GO" id="GO:0106310">
    <property type="term" value="F:protein serine kinase activity"/>
    <property type="evidence" value="ECO:0007669"/>
    <property type="project" value="RHEA"/>
</dbReference>
<dbReference type="GO" id="GO:0004674">
    <property type="term" value="F:protein serine/threonine kinase activity"/>
    <property type="evidence" value="ECO:0007669"/>
    <property type="project" value="UniProtKB-KW"/>
</dbReference>
<dbReference type="GO" id="GO:1901979">
    <property type="term" value="P:regulation of inward rectifier potassium channel activity"/>
    <property type="evidence" value="ECO:0000314"/>
    <property type="project" value="TAIR"/>
</dbReference>
<dbReference type="GO" id="GO:0080092">
    <property type="term" value="P:regulation of pollen tube growth"/>
    <property type="evidence" value="ECO:0000315"/>
    <property type="project" value="TAIR"/>
</dbReference>
<dbReference type="CDD" id="cd00051">
    <property type="entry name" value="EFh"/>
    <property type="match status" value="1"/>
</dbReference>
<dbReference type="CDD" id="cd05117">
    <property type="entry name" value="STKc_CAMK"/>
    <property type="match status" value="1"/>
</dbReference>
<dbReference type="FunFam" id="3.30.200.20:FF:000004">
    <property type="entry name" value="Calcium-dependent protein kinase 1"/>
    <property type="match status" value="1"/>
</dbReference>
<dbReference type="FunFam" id="1.10.510.10:FF:000067">
    <property type="entry name" value="calcium-dependent protein kinase 13"/>
    <property type="match status" value="1"/>
</dbReference>
<dbReference type="FunFam" id="1.10.238.10:FF:000050">
    <property type="entry name" value="Calcium-dependent protein kinase 7"/>
    <property type="match status" value="1"/>
</dbReference>
<dbReference type="Gene3D" id="1.10.238.10">
    <property type="entry name" value="EF-hand"/>
    <property type="match status" value="1"/>
</dbReference>
<dbReference type="Gene3D" id="3.30.200.20">
    <property type="entry name" value="Phosphorylase Kinase, domain 1"/>
    <property type="match status" value="1"/>
</dbReference>
<dbReference type="Gene3D" id="1.10.510.10">
    <property type="entry name" value="Transferase(Phosphotransferase) domain 1"/>
    <property type="match status" value="1"/>
</dbReference>
<dbReference type="InterPro" id="IPR050205">
    <property type="entry name" value="CDPK_Ser/Thr_kinases"/>
</dbReference>
<dbReference type="InterPro" id="IPR011992">
    <property type="entry name" value="EF-hand-dom_pair"/>
</dbReference>
<dbReference type="InterPro" id="IPR018247">
    <property type="entry name" value="EF_Hand_1_Ca_BS"/>
</dbReference>
<dbReference type="InterPro" id="IPR002048">
    <property type="entry name" value="EF_hand_dom"/>
</dbReference>
<dbReference type="InterPro" id="IPR011009">
    <property type="entry name" value="Kinase-like_dom_sf"/>
</dbReference>
<dbReference type="InterPro" id="IPR000719">
    <property type="entry name" value="Prot_kinase_dom"/>
</dbReference>
<dbReference type="InterPro" id="IPR017441">
    <property type="entry name" value="Protein_kinase_ATP_BS"/>
</dbReference>
<dbReference type="InterPro" id="IPR008271">
    <property type="entry name" value="Ser/Thr_kinase_AS"/>
</dbReference>
<dbReference type="PANTHER" id="PTHR24349">
    <property type="entry name" value="SERINE/THREONINE-PROTEIN KINASE"/>
    <property type="match status" value="1"/>
</dbReference>
<dbReference type="Pfam" id="PF13499">
    <property type="entry name" value="EF-hand_7"/>
    <property type="match status" value="2"/>
</dbReference>
<dbReference type="Pfam" id="PF00069">
    <property type="entry name" value="Pkinase"/>
    <property type="match status" value="1"/>
</dbReference>
<dbReference type="SMART" id="SM00054">
    <property type="entry name" value="EFh"/>
    <property type="match status" value="4"/>
</dbReference>
<dbReference type="SMART" id="SM00220">
    <property type="entry name" value="S_TKc"/>
    <property type="match status" value="1"/>
</dbReference>
<dbReference type="SUPFAM" id="SSF47473">
    <property type="entry name" value="EF-hand"/>
    <property type="match status" value="1"/>
</dbReference>
<dbReference type="SUPFAM" id="SSF56112">
    <property type="entry name" value="Protein kinase-like (PK-like)"/>
    <property type="match status" value="1"/>
</dbReference>
<dbReference type="PROSITE" id="PS00018">
    <property type="entry name" value="EF_HAND_1"/>
    <property type="match status" value="4"/>
</dbReference>
<dbReference type="PROSITE" id="PS50222">
    <property type="entry name" value="EF_HAND_2"/>
    <property type="match status" value="4"/>
</dbReference>
<dbReference type="PROSITE" id="PS00107">
    <property type="entry name" value="PROTEIN_KINASE_ATP"/>
    <property type="match status" value="1"/>
</dbReference>
<dbReference type="PROSITE" id="PS50011">
    <property type="entry name" value="PROTEIN_KINASE_DOM"/>
    <property type="match status" value="1"/>
</dbReference>
<dbReference type="PROSITE" id="PS00108">
    <property type="entry name" value="PROTEIN_KINASE_ST"/>
    <property type="match status" value="1"/>
</dbReference>
<comment type="function">
    <text>May play a role in signal transduction pathways that involve calcium as a second messenger.</text>
</comment>
<comment type="catalytic activity">
    <reaction>
        <text>L-seryl-[protein] + ATP = O-phospho-L-seryl-[protein] + ADP + H(+)</text>
        <dbReference type="Rhea" id="RHEA:17989"/>
        <dbReference type="Rhea" id="RHEA-COMP:9863"/>
        <dbReference type="Rhea" id="RHEA-COMP:11604"/>
        <dbReference type="ChEBI" id="CHEBI:15378"/>
        <dbReference type="ChEBI" id="CHEBI:29999"/>
        <dbReference type="ChEBI" id="CHEBI:30616"/>
        <dbReference type="ChEBI" id="CHEBI:83421"/>
        <dbReference type="ChEBI" id="CHEBI:456216"/>
        <dbReference type="EC" id="2.7.11.1"/>
    </reaction>
</comment>
<comment type="catalytic activity">
    <reaction>
        <text>L-threonyl-[protein] + ATP = O-phospho-L-threonyl-[protein] + ADP + H(+)</text>
        <dbReference type="Rhea" id="RHEA:46608"/>
        <dbReference type="Rhea" id="RHEA-COMP:11060"/>
        <dbReference type="Rhea" id="RHEA-COMP:11605"/>
        <dbReference type="ChEBI" id="CHEBI:15378"/>
        <dbReference type="ChEBI" id="CHEBI:30013"/>
        <dbReference type="ChEBI" id="CHEBI:30616"/>
        <dbReference type="ChEBI" id="CHEBI:61977"/>
        <dbReference type="ChEBI" id="CHEBI:456216"/>
        <dbReference type="EC" id="2.7.11.1"/>
    </reaction>
</comment>
<comment type="activity regulation">
    <text evidence="1">Activated by calcium. Autophosphorylation may play an important role in the regulation of the kinase activity (By similarity).</text>
</comment>
<comment type="subcellular location">
    <subcellularLocation>
        <location evidence="8">Membrane</location>
        <topology evidence="8">Lipid-anchor</topology>
    </subcellularLocation>
</comment>
<comment type="domain">
    <text evidence="1">There are 3 contiguous domains conserved in the CDPK subfamily: a kinase domain, an autoinhibitory (junction) domain and a calmodulin-like domain. The autoinhibitory domain (330-360) inactivates kinase activity under calcium-free conditions (By similarity).</text>
</comment>
<comment type="similarity">
    <text evidence="4">Belongs to the protein kinase superfamily. Ser/Thr protein kinase family. CDPK subfamily.</text>
</comment>
<comment type="sequence caution" evidence="8">
    <conflict type="erroneous termination">
        <sequence resource="EMBL-CDS" id="ABK28519"/>
    </conflict>
    <text>Extended C-terminus.</text>
</comment>
<proteinExistence type="evidence at transcript level"/>
<gene>
    <name type="primary">CPK24</name>
    <name type="ordered locus">At2g31500</name>
    <name type="ORF">T28P16.1</name>
    <name type="ORF">T9H9.2</name>
</gene>
<name>CDPKO_ARATH</name>
<protein>
    <recommendedName>
        <fullName>Calcium-dependent protein kinase 24</fullName>
        <ecNumber>2.7.11.1</ecNumber>
    </recommendedName>
</protein>